<sequence length="250" mass="28311">MQNLSLSQDVLPKHIAVIMDGNGRWAKAQGKPRVFGHKNGVAAVRKTISTSARLGIKAVTLFAFSSENWRRPEEEVGVLMELFMTVLSTEIKKLHKNNLRLRVIGDKSRFSERLQTKIAQAEQLTASNTGMVVNIAANYGGQWDILQATQALAEKVTQGELQPSDIDEDVFKQHLTMADLPDVDLLIRTSGECRISNFMLWQLAYAEMYFTPVFWPEFDENCLIEAVTWFVNRERRFGCTGEQVKALMEN</sequence>
<comment type="function">
    <text evidence="1">Catalyzes the sequential condensation of isopentenyl diphosphate (IPP) with (2E,6E)-farnesyl diphosphate (E,E-FPP) to yield (2Z,6Z,10Z,14Z,18Z,22Z,26Z,30Z,34E,38E)-undecaprenyl diphosphate (di-trans,octa-cis-UPP). UPP is the precursor of glycosyl carrier lipid in the biosynthesis of bacterial cell wall polysaccharide components such as peptidoglycan and lipopolysaccharide.</text>
</comment>
<comment type="catalytic activity">
    <reaction evidence="1">
        <text>8 isopentenyl diphosphate + (2E,6E)-farnesyl diphosphate = di-trans,octa-cis-undecaprenyl diphosphate + 8 diphosphate</text>
        <dbReference type="Rhea" id="RHEA:27551"/>
        <dbReference type="ChEBI" id="CHEBI:33019"/>
        <dbReference type="ChEBI" id="CHEBI:58405"/>
        <dbReference type="ChEBI" id="CHEBI:128769"/>
        <dbReference type="ChEBI" id="CHEBI:175763"/>
        <dbReference type="EC" id="2.5.1.31"/>
    </reaction>
</comment>
<comment type="cofactor">
    <cofactor evidence="1">
        <name>Mg(2+)</name>
        <dbReference type="ChEBI" id="CHEBI:18420"/>
    </cofactor>
    <text evidence="1">Binds 2 magnesium ions per subunit.</text>
</comment>
<comment type="subunit">
    <text evidence="1">Homodimer.</text>
</comment>
<comment type="similarity">
    <text evidence="1">Belongs to the UPP synthase family.</text>
</comment>
<comment type="sequence caution" evidence="2">
    <conflict type="erroneous initiation">
        <sequence resource="EMBL-CDS" id="AAF95400"/>
    </conflict>
    <text>Extended N-terminus.</text>
</comment>
<feature type="chain" id="PRO_0000123711" description="Ditrans,polycis-undecaprenyl-diphosphate synthase ((2E,6E)-farnesyl-diphosphate specific)">
    <location>
        <begin position="1"/>
        <end position="250"/>
    </location>
</feature>
<feature type="active site" evidence="1">
    <location>
        <position position="20"/>
    </location>
</feature>
<feature type="active site" description="Proton acceptor" evidence="1">
    <location>
        <position position="68"/>
    </location>
</feature>
<feature type="binding site" evidence="1">
    <location>
        <position position="20"/>
    </location>
    <ligand>
        <name>Mg(2+)</name>
        <dbReference type="ChEBI" id="CHEBI:18420"/>
    </ligand>
</feature>
<feature type="binding site" evidence="1">
    <location>
        <begin position="21"/>
        <end position="24"/>
    </location>
    <ligand>
        <name>substrate</name>
    </ligand>
</feature>
<feature type="binding site" evidence="1">
    <location>
        <position position="25"/>
    </location>
    <ligand>
        <name>substrate</name>
    </ligand>
</feature>
<feature type="binding site" evidence="1">
    <location>
        <position position="33"/>
    </location>
    <ligand>
        <name>substrate</name>
    </ligand>
</feature>
<feature type="binding site" evidence="1">
    <location>
        <position position="37"/>
    </location>
    <ligand>
        <name>substrate</name>
    </ligand>
</feature>
<feature type="binding site" evidence="1">
    <location>
        <begin position="65"/>
        <end position="67"/>
    </location>
    <ligand>
        <name>substrate</name>
    </ligand>
</feature>
<feature type="binding site" evidence="1">
    <location>
        <position position="69"/>
    </location>
    <ligand>
        <name>substrate</name>
    </ligand>
</feature>
<feature type="binding site" evidence="1">
    <location>
        <position position="71"/>
    </location>
    <ligand>
        <name>substrate</name>
    </ligand>
</feature>
<feature type="binding site" evidence="1">
    <location>
        <position position="188"/>
    </location>
    <ligand>
        <name>substrate</name>
    </ligand>
</feature>
<feature type="binding site" evidence="1">
    <location>
        <begin position="194"/>
        <end position="196"/>
    </location>
    <ligand>
        <name>substrate</name>
    </ligand>
</feature>
<feature type="binding site" evidence="1">
    <location>
        <position position="207"/>
    </location>
    <ligand>
        <name>Mg(2+)</name>
        <dbReference type="ChEBI" id="CHEBI:18420"/>
    </ligand>
</feature>
<reference key="1">
    <citation type="journal article" date="2000" name="Nature">
        <title>DNA sequence of both chromosomes of the cholera pathogen Vibrio cholerae.</title>
        <authorList>
            <person name="Heidelberg J.F."/>
            <person name="Eisen J.A."/>
            <person name="Nelson W.C."/>
            <person name="Clayton R.A."/>
            <person name="Gwinn M.L."/>
            <person name="Dodson R.J."/>
            <person name="Haft D.H."/>
            <person name="Hickey E.K."/>
            <person name="Peterson J.D."/>
            <person name="Umayam L.A."/>
            <person name="Gill S.R."/>
            <person name="Nelson K.E."/>
            <person name="Read T.D."/>
            <person name="Tettelin H."/>
            <person name="Richardson D.L."/>
            <person name="Ermolaeva M.D."/>
            <person name="Vamathevan J.J."/>
            <person name="Bass S."/>
            <person name="Qin H."/>
            <person name="Dragoi I."/>
            <person name="Sellers P."/>
            <person name="McDonald L.A."/>
            <person name="Utterback T.R."/>
            <person name="Fleischmann R.D."/>
            <person name="Nierman W.C."/>
            <person name="White O."/>
            <person name="Salzberg S.L."/>
            <person name="Smith H.O."/>
            <person name="Colwell R.R."/>
            <person name="Mekalanos J.J."/>
            <person name="Venter J.C."/>
            <person name="Fraser C.M."/>
        </authorList>
    </citation>
    <scope>NUCLEOTIDE SEQUENCE [LARGE SCALE GENOMIC DNA]</scope>
    <source>
        <strain>ATCC 39315 / El Tor Inaba N16961</strain>
    </source>
</reference>
<evidence type="ECO:0000255" key="1">
    <source>
        <dbReference type="HAMAP-Rule" id="MF_01139"/>
    </source>
</evidence>
<evidence type="ECO:0000305" key="2"/>
<dbReference type="EC" id="2.5.1.31" evidence="1"/>
<dbReference type="EMBL" id="AE003852">
    <property type="protein sequence ID" value="AAF95400.1"/>
    <property type="status" value="ALT_INIT"/>
    <property type="molecule type" value="Genomic_DNA"/>
</dbReference>
<dbReference type="PIR" id="F82099">
    <property type="entry name" value="F82099"/>
</dbReference>
<dbReference type="RefSeq" id="NP_231887.1">
    <property type="nucleotide sequence ID" value="NC_002505.1"/>
</dbReference>
<dbReference type="RefSeq" id="WP_001180544.1">
    <property type="nucleotide sequence ID" value="NZ_LT906614.1"/>
</dbReference>
<dbReference type="SMR" id="Q9KPV6"/>
<dbReference type="STRING" id="243277.VC_2256"/>
<dbReference type="DNASU" id="2613178"/>
<dbReference type="EnsemblBacteria" id="AAF95400">
    <property type="protein sequence ID" value="AAF95400"/>
    <property type="gene ID" value="VC_2256"/>
</dbReference>
<dbReference type="KEGG" id="vch:VC_2256"/>
<dbReference type="PATRIC" id="fig|243277.26.peg.2152"/>
<dbReference type="eggNOG" id="COG0020">
    <property type="taxonomic scope" value="Bacteria"/>
</dbReference>
<dbReference type="HOGENOM" id="CLU_038505_1_1_6"/>
<dbReference type="Proteomes" id="UP000000584">
    <property type="component" value="Chromosome 1"/>
</dbReference>
<dbReference type="GO" id="GO:0005829">
    <property type="term" value="C:cytosol"/>
    <property type="evidence" value="ECO:0000318"/>
    <property type="project" value="GO_Central"/>
</dbReference>
<dbReference type="GO" id="GO:0008834">
    <property type="term" value="F:ditrans,polycis-undecaprenyl-diphosphate synthase [(2E,6E)-farnesyl-diphosphate specific] activity"/>
    <property type="evidence" value="ECO:0000318"/>
    <property type="project" value="GO_Central"/>
</dbReference>
<dbReference type="GO" id="GO:0000287">
    <property type="term" value="F:magnesium ion binding"/>
    <property type="evidence" value="ECO:0000318"/>
    <property type="project" value="GO_Central"/>
</dbReference>
<dbReference type="GO" id="GO:0071555">
    <property type="term" value="P:cell wall organization"/>
    <property type="evidence" value="ECO:0007669"/>
    <property type="project" value="UniProtKB-KW"/>
</dbReference>
<dbReference type="GO" id="GO:0009252">
    <property type="term" value="P:peptidoglycan biosynthetic process"/>
    <property type="evidence" value="ECO:0007669"/>
    <property type="project" value="UniProtKB-UniRule"/>
</dbReference>
<dbReference type="GO" id="GO:0016094">
    <property type="term" value="P:polyprenol biosynthetic process"/>
    <property type="evidence" value="ECO:0000318"/>
    <property type="project" value="GO_Central"/>
</dbReference>
<dbReference type="GO" id="GO:0008360">
    <property type="term" value="P:regulation of cell shape"/>
    <property type="evidence" value="ECO:0007669"/>
    <property type="project" value="UniProtKB-KW"/>
</dbReference>
<dbReference type="CDD" id="cd00475">
    <property type="entry name" value="Cis_IPPS"/>
    <property type="match status" value="1"/>
</dbReference>
<dbReference type="FunFam" id="3.40.1180.10:FF:000001">
    <property type="entry name" value="(2E,6E)-farnesyl-diphosphate-specific ditrans,polycis-undecaprenyl-diphosphate synthase"/>
    <property type="match status" value="1"/>
</dbReference>
<dbReference type="Gene3D" id="3.40.1180.10">
    <property type="entry name" value="Decaprenyl diphosphate synthase-like"/>
    <property type="match status" value="1"/>
</dbReference>
<dbReference type="HAMAP" id="MF_01139">
    <property type="entry name" value="ISPT"/>
    <property type="match status" value="1"/>
</dbReference>
<dbReference type="InterPro" id="IPR001441">
    <property type="entry name" value="UPP_synth-like"/>
</dbReference>
<dbReference type="InterPro" id="IPR018520">
    <property type="entry name" value="UPP_synth-like_CS"/>
</dbReference>
<dbReference type="InterPro" id="IPR036424">
    <property type="entry name" value="UPP_synth-like_sf"/>
</dbReference>
<dbReference type="NCBIfam" id="NF011405">
    <property type="entry name" value="PRK14830.1"/>
    <property type="match status" value="1"/>
</dbReference>
<dbReference type="NCBIfam" id="TIGR00055">
    <property type="entry name" value="uppS"/>
    <property type="match status" value="1"/>
</dbReference>
<dbReference type="PANTHER" id="PTHR10291:SF0">
    <property type="entry name" value="DEHYDRODOLICHYL DIPHOSPHATE SYNTHASE 2"/>
    <property type="match status" value="1"/>
</dbReference>
<dbReference type="PANTHER" id="PTHR10291">
    <property type="entry name" value="DEHYDRODOLICHYL DIPHOSPHATE SYNTHASE FAMILY MEMBER"/>
    <property type="match status" value="1"/>
</dbReference>
<dbReference type="Pfam" id="PF01255">
    <property type="entry name" value="Prenyltransf"/>
    <property type="match status" value="1"/>
</dbReference>
<dbReference type="SUPFAM" id="SSF64005">
    <property type="entry name" value="Undecaprenyl diphosphate synthase"/>
    <property type="match status" value="1"/>
</dbReference>
<dbReference type="PROSITE" id="PS01066">
    <property type="entry name" value="UPP_SYNTHASE"/>
    <property type="match status" value="1"/>
</dbReference>
<proteinExistence type="inferred from homology"/>
<gene>
    <name evidence="1" type="primary">uppS</name>
    <name type="ordered locus">VC_2256</name>
</gene>
<organism>
    <name type="scientific">Vibrio cholerae serotype O1 (strain ATCC 39315 / El Tor Inaba N16961)</name>
    <dbReference type="NCBI Taxonomy" id="243277"/>
    <lineage>
        <taxon>Bacteria</taxon>
        <taxon>Pseudomonadati</taxon>
        <taxon>Pseudomonadota</taxon>
        <taxon>Gammaproteobacteria</taxon>
        <taxon>Vibrionales</taxon>
        <taxon>Vibrionaceae</taxon>
        <taxon>Vibrio</taxon>
    </lineage>
</organism>
<accession>Q9KPV6</accession>
<keyword id="KW-0133">Cell shape</keyword>
<keyword id="KW-0961">Cell wall biogenesis/degradation</keyword>
<keyword id="KW-0460">Magnesium</keyword>
<keyword id="KW-0479">Metal-binding</keyword>
<keyword id="KW-0573">Peptidoglycan synthesis</keyword>
<keyword id="KW-1185">Reference proteome</keyword>
<keyword id="KW-0808">Transferase</keyword>
<protein>
    <recommendedName>
        <fullName evidence="1">Ditrans,polycis-undecaprenyl-diphosphate synthase ((2E,6E)-farnesyl-diphosphate specific)</fullName>
        <ecNumber evidence="1">2.5.1.31</ecNumber>
    </recommendedName>
    <alternativeName>
        <fullName evidence="1">Ditrans,polycis-undecaprenylcistransferase</fullName>
    </alternativeName>
    <alternativeName>
        <fullName evidence="1">Undecaprenyl diphosphate synthase</fullName>
        <shortName evidence="1">UDS</shortName>
    </alternativeName>
    <alternativeName>
        <fullName evidence="1">Undecaprenyl pyrophosphate synthase</fullName>
        <shortName evidence="1">UPP synthase</shortName>
    </alternativeName>
</protein>
<name>UPPS_VIBCH</name>